<dbReference type="EC" id="2.1.1.33" evidence="2"/>
<dbReference type="EMBL" id="CP000282">
    <property type="protein sequence ID" value="ABD82847.1"/>
    <property type="molecule type" value="Genomic_DNA"/>
</dbReference>
<dbReference type="RefSeq" id="WP_011470062.1">
    <property type="nucleotide sequence ID" value="NC_007912.1"/>
</dbReference>
<dbReference type="SMR" id="Q21EN2"/>
<dbReference type="STRING" id="203122.Sde_3592"/>
<dbReference type="GeneID" id="98615202"/>
<dbReference type="KEGG" id="sde:Sde_3592"/>
<dbReference type="eggNOG" id="COG0220">
    <property type="taxonomic scope" value="Bacteria"/>
</dbReference>
<dbReference type="HOGENOM" id="CLU_050910_0_1_6"/>
<dbReference type="OrthoDB" id="9802090at2"/>
<dbReference type="UniPathway" id="UPA00989"/>
<dbReference type="Proteomes" id="UP000001947">
    <property type="component" value="Chromosome"/>
</dbReference>
<dbReference type="GO" id="GO:0043527">
    <property type="term" value="C:tRNA methyltransferase complex"/>
    <property type="evidence" value="ECO:0007669"/>
    <property type="project" value="TreeGrafter"/>
</dbReference>
<dbReference type="GO" id="GO:0008176">
    <property type="term" value="F:tRNA (guanine(46)-N7)-methyltransferase activity"/>
    <property type="evidence" value="ECO:0007669"/>
    <property type="project" value="UniProtKB-UniRule"/>
</dbReference>
<dbReference type="CDD" id="cd02440">
    <property type="entry name" value="AdoMet_MTases"/>
    <property type="match status" value="1"/>
</dbReference>
<dbReference type="FunFam" id="3.40.50.150:FF:000035">
    <property type="entry name" value="tRNA (guanine-N(7)-)-methyltransferase"/>
    <property type="match status" value="1"/>
</dbReference>
<dbReference type="Gene3D" id="3.40.50.150">
    <property type="entry name" value="Vaccinia Virus protein VP39"/>
    <property type="match status" value="1"/>
</dbReference>
<dbReference type="HAMAP" id="MF_01057">
    <property type="entry name" value="tRNA_methyltr_TrmB"/>
    <property type="match status" value="1"/>
</dbReference>
<dbReference type="InterPro" id="IPR029063">
    <property type="entry name" value="SAM-dependent_MTases_sf"/>
</dbReference>
<dbReference type="InterPro" id="IPR003358">
    <property type="entry name" value="tRNA_(Gua-N-7)_MeTrfase_Trmb"/>
</dbReference>
<dbReference type="InterPro" id="IPR055361">
    <property type="entry name" value="tRNA_methyltr_TrmB_bact"/>
</dbReference>
<dbReference type="NCBIfam" id="TIGR00091">
    <property type="entry name" value="tRNA (guanosine(46)-N7)-methyltransferase TrmB"/>
    <property type="match status" value="1"/>
</dbReference>
<dbReference type="PANTHER" id="PTHR23417">
    <property type="entry name" value="3-DEOXY-D-MANNO-OCTULOSONIC-ACID TRANSFERASE/TRNA GUANINE-N 7 - -METHYLTRANSFERASE"/>
    <property type="match status" value="1"/>
</dbReference>
<dbReference type="PANTHER" id="PTHR23417:SF14">
    <property type="entry name" value="PENTACOTRIPEPTIDE-REPEAT REGION OF PRORP DOMAIN-CONTAINING PROTEIN"/>
    <property type="match status" value="1"/>
</dbReference>
<dbReference type="Pfam" id="PF02390">
    <property type="entry name" value="Methyltransf_4"/>
    <property type="match status" value="1"/>
</dbReference>
<dbReference type="SUPFAM" id="SSF53335">
    <property type="entry name" value="S-adenosyl-L-methionine-dependent methyltransferases"/>
    <property type="match status" value="1"/>
</dbReference>
<dbReference type="PROSITE" id="PS51625">
    <property type="entry name" value="SAM_MT_TRMB"/>
    <property type="match status" value="1"/>
</dbReference>
<protein>
    <recommendedName>
        <fullName evidence="2">tRNA (guanine-N(7)-)-methyltransferase</fullName>
        <ecNumber evidence="2">2.1.1.33</ecNumber>
    </recommendedName>
    <alternativeName>
        <fullName evidence="2">tRNA (guanine(46)-N(7))-methyltransferase</fullName>
    </alternativeName>
    <alternativeName>
        <fullName evidence="2">tRNA(m7G46)-methyltransferase</fullName>
    </alternativeName>
</protein>
<comment type="function">
    <text evidence="2">Catalyzes the formation of N(7)-methylguanine at position 46 (m7G46) in tRNA.</text>
</comment>
<comment type="catalytic activity">
    <reaction evidence="2">
        <text>guanosine(46) in tRNA + S-adenosyl-L-methionine = N(7)-methylguanosine(46) in tRNA + S-adenosyl-L-homocysteine</text>
        <dbReference type="Rhea" id="RHEA:42708"/>
        <dbReference type="Rhea" id="RHEA-COMP:10188"/>
        <dbReference type="Rhea" id="RHEA-COMP:10189"/>
        <dbReference type="ChEBI" id="CHEBI:57856"/>
        <dbReference type="ChEBI" id="CHEBI:59789"/>
        <dbReference type="ChEBI" id="CHEBI:74269"/>
        <dbReference type="ChEBI" id="CHEBI:74480"/>
        <dbReference type="EC" id="2.1.1.33"/>
    </reaction>
</comment>
<comment type="pathway">
    <text evidence="2">tRNA modification; N(7)-methylguanine-tRNA biosynthesis.</text>
</comment>
<comment type="similarity">
    <text evidence="2">Belongs to the class I-like SAM-binding methyltransferase superfamily. TrmB family.</text>
</comment>
<feature type="chain" id="PRO_0000288220" description="tRNA (guanine-N(7)-)-methyltransferase">
    <location>
        <begin position="1"/>
        <end position="229"/>
    </location>
</feature>
<feature type="region of interest" description="Interaction with RNA" evidence="2">
    <location>
        <begin position="140"/>
        <end position="145"/>
    </location>
</feature>
<feature type="active site" evidence="1">
    <location>
        <position position="134"/>
    </location>
</feature>
<feature type="binding site" evidence="2">
    <location>
        <position position="59"/>
    </location>
    <ligand>
        <name>S-adenosyl-L-methionine</name>
        <dbReference type="ChEBI" id="CHEBI:59789"/>
    </ligand>
</feature>
<feature type="binding site" evidence="2">
    <location>
        <position position="84"/>
    </location>
    <ligand>
        <name>S-adenosyl-L-methionine</name>
        <dbReference type="ChEBI" id="CHEBI:59789"/>
    </ligand>
</feature>
<feature type="binding site" evidence="2">
    <location>
        <position position="111"/>
    </location>
    <ligand>
        <name>S-adenosyl-L-methionine</name>
        <dbReference type="ChEBI" id="CHEBI:59789"/>
    </ligand>
</feature>
<feature type="binding site" evidence="2">
    <location>
        <position position="134"/>
    </location>
    <ligand>
        <name>S-adenosyl-L-methionine</name>
        <dbReference type="ChEBI" id="CHEBI:59789"/>
    </ligand>
</feature>
<feature type="binding site" evidence="2">
    <location>
        <position position="138"/>
    </location>
    <ligand>
        <name>substrate</name>
    </ligand>
</feature>
<feature type="binding site" evidence="2">
    <location>
        <position position="170"/>
    </location>
    <ligand>
        <name>substrate</name>
    </ligand>
</feature>
<feature type="binding site" evidence="2">
    <location>
        <begin position="207"/>
        <end position="210"/>
    </location>
    <ligand>
        <name>substrate</name>
    </ligand>
</feature>
<organism>
    <name type="scientific">Saccharophagus degradans (strain 2-40 / ATCC 43961 / DSM 17024)</name>
    <dbReference type="NCBI Taxonomy" id="203122"/>
    <lineage>
        <taxon>Bacteria</taxon>
        <taxon>Pseudomonadati</taxon>
        <taxon>Pseudomonadota</taxon>
        <taxon>Gammaproteobacteria</taxon>
        <taxon>Cellvibrionales</taxon>
        <taxon>Cellvibrionaceae</taxon>
        <taxon>Saccharophagus</taxon>
    </lineage>
</organism>
<proteinExistence type="inferred from homology"/>
<keyword id="KW-0489">Methyltransferase</keyword>
<keyword id="KW-1185">Reference proteome</keyword>
<keyword id="KW-0949">S-adenosyl-L-methionine</keyword>
<keyword id="KW-0808">Transferase</keyword>
<keyword id="KW-0819">tRNA processing</keyword>
<name>TRMB_SACD2</name>
<evidence type="ECO:0000250" key="1"/>
<evidence type="ECO:0000255" key="2">
    <source>
        <dbReference type="HAMAP-Rule" id="MF_01057"/>
    </source>
</evidence>
<gene>
    <name evidence="2" type="primary">trmB</name>
    <name type="ordered locus">Sde_3592</name>
</gene>
<reference key="1">
    <citation type="journal article" date="2008" name="PLoS Genet.">
        <title>Complete genome sequence of the complex carbohydrate-degrading marine bacterium, Saccharophagus degradans strain 2-40 T.</title>
        <authorList>
            <person name="Weiner R.M."/>
            <person name="Taylor L.E. II"/>
            <person name="Henrissat B."/>
            <person name="Hauser L."/>
            <person name="Land M."/>
            <person name="Coutinho P.M."/>
            <person name="Rancurel C."/>
            <person name="Saunders E.H."/>
            <person name="Longmire A.G."/>
            <person name="Zhang H."/>
            <person name="Bayer E.A."/>
            <person name="Gilbert H.J."/>
            <person name="Larimer F."/>
            <person name="Zhulin I.B."/>
            <person name="Ekborg N.A."/>
            <person name="Lamed R."/>
            <person name="Richardson P.M."/>
            <person name="Borovok I."/>
            <person name="Hutcheson S."/>
        </authorList>
    </citation>
    <scope>NUCLEOTIDE SEQUENCE [LARGE SCALE GENOMIC DNA]</scope>
    <source>
        <strain>2-40 / ATCC 43961 / DSM 17024</strain>
    </source>
</reference>
<sequence length="229" mass="25758">MQPEFKKKSIRSFVIRGGRMTEGQKNAFDKWWPHYGVSLFDGPINPAELFGRSAPLVLEIGFGMGDSLVDMAIADPDSDFIGIEVHPPGVGRLINRAGTEGVPNLRCYMADANDVLSDCIPDGSLDRLQLFFPDPWHKKKHNKRRIVQPEFVEKIRAKLKIGGHFHMATDWEAYAEHMMEVMTAAPGYENIAGGSEFAPQPSYRPTTKFERRGENLGHGVWDIIFSRSL</sequence>
<accession>Q21EN2</accession>